<comment type="catalytic activity">
    <reaction evidence="1">
        <text>L-methionyl-[protein] + [thioredoxin]-disulfide + H2O = L-methionyl-(R)-S-oxide-[protein] + [thioredoxin]-dithiol</text>
        <dbReference type="Rhea" id="RHEA:24164"/>
        <dbReference type="Rhea" id="RHEA-COMP:10698"/>
        <dbReference type="Rhea" id="RHEA-COMP:10700"/>
        <dbReference type="Rhea" id="RHEA-COMP:12313"/>
        <dbReference type="Rhea" id="RHEA-COMP:12314"/>
        <dbReference type="ChEBI" id="CHEBI:15377"/>
        <dbReference type="ChEBI" id="CHEBI:16044"/>
        <dbReference type="ChEBI" id="CHEBI:29950"/>
        <dbReference type="ChEBI" id="CHEBI:45764"/>
        <dbReference type="ChEBI" id="CHEBI:50058"/>
        <dbReference type="EC" id="1.8.4.12"/>
    </reaction>
</comment>
<comment type="similarity">
    <text evidence="1">Belongs to the MsrB Met sulfoxide reductase family.</text>
</comment>
<dbReference type="EC" id="1.8.4.12" evidence="1"/>
<dbReference type="EMBL" id="CP000312">
    <property type="protein sequence ID" value="ABG86968.1"/>
    <property type="molecule type" value="Genomic_DNA"/>
</dbReference>
<dbReference type="RefSeq" id="WP_011592523.1">
    <property type="nucleotide sequence ID" value="NC_008262.1"/>
</dbReference>
<dbReference type="SMR" id="Q0SSL4"/>
<dbReference type="KEGG" id="cpr:CPR_1577"/>
<dbReference type="Proteomes" id="UP000001824">
    <property type="component" value="Chromosome"/>
</dbReference>
<dbReference type="GO" id="GO:0005737">
    <property type="term" value="C:cytoplasm"/>
    <property type="evidence" value="ECO:0007669"/>
    <property type="project" value="TreeGrafter"/>
</dbReference>
<dbReference type="GO" id="GO:0033743">
    <property type="term" value="F:peptide-methionine (R)-S-oxide reductase activity"/>
    <property type="evidence" value="ECO:0007669"/>
    <property type="project" value="UniProtKB-UniRule"/>
</dbReference>
<dbReference type="GO" id="GO:0030091">
    <property type="term" value="P:protein repair"/>
    <property type="evidence" value="ECO:0007669"/>
    <property type="project" value="InterPro"/>
</dbReference>
<dbReference type="GO" id="GO:0006979">
    <property type="term" value="P:response to oxidative stress"/>
    <property type="evidence" value="ECO:0007669"/>
    <property type="project" value="InterPro"/>
</dbReference>
<dbReference type="FunFam" id="2.170.150.20:FF:000003">
    <property type="entry name" value="Peptide methionine sulfoxide reductase MsrB"/>
    <property type="match status" value="1"/>
</dbReference>
<dbReference type="Gene3D" id="2.170.150.20">
    <property type="entry name" value="Peptide methionine sulfoxide reductase"/>
    <property type="match status" value="1"/>
</dbReference>
<dbReference type="HAMAP" id="MF_01400">
    <property type="entry name" value="MsrB"/>
    <property type="match status" value="1"/>
</dbReference>
<dbReference type="InterPro" id="IPR028427">
    <property type="entry name" value="Met_Sox_Rdtase_MsrB"/>
</dbReference>
<dbReference type="InterPro" id="IPR002579">
    <property type="entry name" value="Met_Sox_Rdtase_MsrB_dom"/>
</dbReference>
<dbReference type="InterPro" id="IPR011057">
    <property type="entry name" value="Mss4-like_sf"/>
</dbReference>
<dbReference type="NCBIfam" id="TIGR00357">
    <property type="entry name" value="peptide-methionine (R)-S-oxide reductase MsrB"/>
    <property type="match status" value="1"/>
</dbReference>
<dbReference type="PANTHER" id="PTHR10173">
    <property type="entry name" value="METHIONINE SULFOXIDE REDUCTASE"/>
    <property type="match status" value="1"/>
</dbReference>
<dbReference type="PANTHER" id="PTHR10173:SF59">
    <property type="entry name" value="PEPTIDE METHIONINE SULFOXIDE REDUCTASE MSRA_MSRB"/>
    <property type="match status" value="1"/>
</dbReference>
<dbReference type="Pfam" id="PF01641">
    <property type="entry name" value="SelR"/>
    <property type="match status" value="1"/>
</dbReference>
<dbReference type="SUPFAM" id="SSF51316">
    <property type="entry name" value="Mss4-like"/>
    <property type="match status" value="1"/>
</dbReference>
<dbReference type="PROSITE" id="PS51790">
    <property type="entry name" value="MSRB"/>
    <property type="match status" value="1"/>
</dbReference>
<evidence type="ECO:0000255" key="1">
    <source>
        <dbReference type="HAMAP-Rule" id="MF_01400"/>
    </source>
</evidence>
<evidence type="ECO:0000255" key="2">
    <source>
        <dbReference type="PROSITE-ProRule" id="PRU01126"/>
    </source>
</evidence>
<accession>Q0SSL4</accession>
<sequence>MKYKKKEKEELKKILTEEEYYVTQENGTERPFTNEYWDFNGEGIYVDITTGEPLFTSKDKFHSSCGWPAFSKPIDRSIIKEKVDKSHGMVRTEVRSKLGDSHLGHVFCDGPEELGGLRYCINSASLKFIPKEELKEKGYEEYLELFK</sequence>
<protein>
    <recommendedName>
        <fullName evidence="1">Peptide methionine sulfoxide reductase MsrB</fullName>
        <ecNumber evidence="1">1.8.4.12</ecNumber>
    </recommendedName>
    <alternativeName>
        <fullName evidence="1">Peptide-methionine (R)-S-oxide reductase</fullName>
    </alternativeName>
</protein>
<proteinExistence type="inferred from homology"/>
<gene>
    <name evidence="1" type="primary">msrB</name>
    <name type="ordered locus">CPR_1577</name>
</gene>
<keyword id="KW-0560">Oxidoreductase</keyword>
<reference key="1">
    <citation type="journal article" date="2006" name="Genome Res.">
        <title>Skewed genomic variability in strains of the toxigenic bacterial pathogen, Clostridium perfringens.</title>
        <authorList>
            <person name="Myers G.S.A."/>
            <person name="Rasko D.A."/>
            <person name="Cheung J.K."/>
            <person name="Ravel J."/>
            <person name="Seshadri R."/>
            <person name="DeBoy R.T."/>
            <person name="Ren Q."/>
            <person name="Varga J."/>
            <person name="Awad M.M."/>
            <person name="Brinkac L.M."/>
            <person name="Daugherty S.C."/>
            <person name="Haft D.H."/>
            <person name="Dodson R.J."/>
            <person name="Madupu R."/>
            <person name="Nelson W.C."/>
            <person name="Rosovitz M.J."/>
            <person name="Sullivan S.A."/>
            <person name="Khouri H."/>
            <person name="Dimitrov G.I."/>
            <person name="Watkins K.L."/>
            <person name="Mulligan S."/>
            <person name="Benton J."/>
            <person name="Radune D."/>
            <person name="Fisher D.J."/>
            <person name="Atkins H.S."/>
            <person name="Hiscox T."/>
            <person name="Jost B.H."/>
            <person name="Billington S.J."/>
            <person name="Songer J.G."/>
            <person name="McClane B.A."/>
            <person name="Titball R.W."/>
            <person name="Rood J.I."/>
            <person name="Melville S.B."/>
            <person name="Paulsen I.T."/>
        </authorList>
    </citation>
    <scope>NUCLEOTIDE SEQUENCE [LARGE SCALE GENOMIC DNA]</scope>
    <source>
        <strain>SM101 / Type A</strain>
    </source>
</reference>
<organism>
    <name type="scientific">Clostridium perfringens (strain SM101 / Type A)</name>
    <dbReference type="NCBI Taxonomy" id="289380"/>
    <lineage>
        <taxon>Bacteria</taxon>
        <taxon>Bacillati</taxon>
        <taxon>Bacillota</taxon>
        <taxon>Clostridia</taxon>
        <taxon>Eubacteriales</taxon>
        <taxon>Clostridiaceae</taxon>
        <taxon>Clostridium</taxon>
    </lineage>
</organism>
<name>MSRB_CLOPS</name>
<feature type="chain" id="PRO_1000068267" description="Peptide methionine sulfoxide reductase MsrB">
    <location>
        <begin position="1"/>
        <end position="147"/>
    </location>
</feature>
<feature type="domain" description="MsrB" evidence="2">
    <location>
        <begin position="8"/>
        <end position="131"/>
    </location>
</feature>
<feature type="active site" description="Nucleophile" evidence="2">
    <location>
        <position position="120"/>
    </location>
</feature>